<reference evidence="6" key="1">
    <citation type="journal article" date="2000" name="Science">
        <title>The genome sequence of Drosophila melanogaster.</title>
        <authorList>
            <person name="Adams M.D."/>
            <person name="Celniker S.E."/>
            <person name="Holt R.A."/>
            <person name="Evans C.A."/>
            <person name="Gocayne J.D."/>
            <person name="Amanatides P.G."/>
            <person name="Scherer S.E."/>
            <person name="Li P.W."/>
            <person name="Hoskins R.A."/>
            <person name="Galle R.F."/>
            <person name="George R.A."/>
            <person name="Lewis S.E."/>
            <person name="Richards S."/>
            <person name="Ashburner M."/>
            <person name="Henderson S.N."/>
            <person name="Sutton G.G."/>
            <person name="Wortman J.R."/>
            <person name="Yandell M.D."/>
            <person name="Zhang Q."/>
            <person name="Chen L.X."/>
            <person name="Brandon R.C."/>
            <person name="Rogers Y.-H.C."/>
            <person name="Blazej R.G."/>
            <person name="Champe M."/>
            <person name="Pfeiffer B.D."/>
            <person name="Wan K.H."/>
            <person name="Doyle C."/>
            <person name="Baxter E.G."/>
            <person name="Helt G."/>
            <person name="Nelson C.R."/>
            <person name="Miklos G.L.G."/>
            <person name="Abril J.F."/>
            <person name="Agbayani A."/>
            <person name="An H.-J."/>
            <person name="Andrews-Pfannkoch C."/>
            <person name="Baldwin D."/>
            <person name="Ballew R.M."/>
            <person name="Basu A."/>
            <person name="Baxendale J."/>
            <person name="Bayraktaroglu L."/>
            <person name="Beasley E.M."/>
            <person name="Beeson K.Y."/>
            <person name="Benos P.V."/>
            <person name="Berman B.P."/>
            <person name="Bhandari D."/>
            <person name="Bolshakov S."/>
            <person name="Borkova D."/>
            <person name="Botchan M.R."/>
            <person name="Bouck J."/>
            <person name="Brokstein P."/>
            <person name="Brottier P."/>
            <person name="Burtis K.C."/>
            <person name="Busam D.A."/>
            <person name="Butler H."/>
            <person name="Cadieu E."/>
            <person name="Center A."/>
            <person name="Chandra I."/>
            <person name="Cherry J.M."/>
            <person name="Cawley S."/>
            <person name="Dahlke C."/>
            <person name="Davenport L.B."/>
            <person name="Davies P."/>
            <person name="de Pablos B."/>
            <person name="Delcher A."/>
            <person name="Deng Z."/>
            <person name="Mays A.D."/>
            <person name="Dew I."/>
            <person name="Dietz S.M."/>
            <person name="Dodson K."/>
            <person name="Doup L.E."/>
            <person name="Downes M."/>
            <person name="Dugan-Rocha S."/>
            <person name="Dunkov B.C."/>
            <person name="Dunn P."/>
            <person name="Durbin K.J."/>
            <person name="Evangelista C.C."/>
            <person name="Ferraz C."/>
            <person name="Ferriera S."/>
            <person name="Fleischmann W."/>
            <person name="Fosler C."/>
            <person name="Gabrielian A.E."/>
            <person name="Garg N.S."/>
            <person name="Gelbart W.M."/>
            <person name="Glasser K."/>
            <person name="Glodek A."/>
            <person name="Gong F."/>
            <person name="Gorrell J.H."/>
            <person name="Gu Z."/>
            <person name="Guan P."/>
            <person name="Harris M."/>
            <person name="Harris N.L."/>
            <person name="Harvey D.A."/>
            <person name="Heiman T.J."/>
            <person name="Hernandez J.R."/>
            <person name="Houck J."/>
            <person name="Hostin D."/>
            <person name="Houston K.A."/>
            <person name="Howland T.J."/>
            <person name="Wei M.-H."/>
            <person name="Ibegwam C."/>
            <person name="Jalali M."/>
            <person name="Kalush F."/>
            <person name="Karpen G.H."/>
            <person name="Ke Z."/>
            <person name="Kennison J.A."/>
            <person name="Ketchum K.A."/>
            <person name="Kimmel B.E."/>
            <person name="Kodira C.D."/>
            <person name="Kraft C.L."/>
            <person name="Kravitz S."/>
            <person name="Kulp D."/>
            <person name="Lai Z."/>
            <person name="Lasko P."/>
            <person name="Lei Y."/>
            <person name="Levitsky A.A."/>
            <person name="Li J.H."/>
            <person name="Li Z."/>
            <person name="Liang Y."/>
            <person name="Lin X."/>
            <person name="Liu X."/>
            <person name="Mattei B."/>
            <person name="McIntosh T.C."/>
            <person name="McLeod M.P."/>
            <person name="McPherson D."/>
            <person name="Merkulov G."/>
            <person name="Milshina N.V."/>
            <person name="Mobarry C."/>
            <person name="Morris J."/>
            <person name="Moshrefi A."/>
            <person name="Mount S.M."/>
            <person name="Moy M."/>
            <person name="Murphy B."/>
            <person name="Murphy L."/>
            <person name="Muzny D.M."/>
            <person name="Nelson D.L."/>
            <person name="Nelson D.R."/>
            <person name="Nelson K.A."/>
            <person name="Nixon K."/>
            <person name="Nusskern D.R."/>
            <person name="Pacleb J.M."/>
            <person name="Palazzolo M."/>
            <person name="Pittman G.S."/>
            <person name="Pan S."/>
            <person name="Pollard J."/>
            <person name="Puri V."/>
            <person name="Reese M.G."/>
            <person name="Reinert K."/>
            <person name="Remington K."/>
            <person name="Saunders R.D.C."/>
            <person name="Scheeler F."/>
            <person name="Shen H."/>
            <person name="Shue B.C."/>
            <person name="Siden-Kiamos I."/>
            <person name="Simpson M."/>
            <person name="Skupski M.P."/>
            <person name="Smith T.J."/>
            <person name="Spier E."/>
            <person name="Spradling A.C."/>
            <person name="Stapleton M."/>
            <person name="Strong R."/>
            <person name="Sun E."/>
            <person name="Svirskas R."/>
            <person name="Tector C."/>
            <person name="Turner R."/>
            <person name="Venter E."/>
            <person name="Wang A.H."/>
            <person name="Wang X."/>
            <person name="Wang Z.-Y."/>
            <person name="Wassarman D.A."/>
            <person name="Weinstock G.M."/>
            <person name="Weissenbach J."/>
            <person name="Williams S.M."/>
            <person name="Woodage T."/>
            <person name="Worley K.C."/>
            <person name="Wu D."/>
            <person name="Yang S."/>
            <person name="Yao Q.A."/>
            <person name="Ye J."/>
            <person name="Yeh R.-F."/>
            <person name="Zaveri J.S."/>
            <person name="Zhan M."/>
            <person name="Zhang G."/>
            <person name="Zhao Q."/>
            <person name="Zheng L."/>
            <person name="Zheng X.H."/>
            <person name="Zhong F.N."/>
            <person name="Zhong W."/>
            <person name="Zhou X."/>
            <person name="Zhu S.C."/>
            <person name="Zhu X."/>
            <person name="Smith H.O."/>
            <person name="Gibbs R.A."/>
            <person name="Myers E.W."/>
            <person name="Rubin G.M."/>
            <person name="Venter J.C."/>
        </authorList>
    </citation>
    <scope>NUCLEOTIDE SEQUENCE [LARGE SCALE GENOMIC DNA]</scope>
    <source>
        <strain evidence="3">Berkeley</strain>
    </source>
</reference>
<reference evidence="6" key="2">
    <citation type="journal article" date="2002" name="Genome Biol.">
        <title>Annotation of the Drosophila melanogaster euchromatic genome: a systematic review.</title>
        <authorList>
            <person name="Misra S."/>
            <person name="Crosby M.A."/>
            <person name="Mungall C.J."/>
            <person name="Matthews B.B."/>
            <person name="Campbell K.S."/>
            <person name="Hradecky P."/>
            <person name="Huang Y."/>
            <person name="Kaminker J.S."/>
            <person name="Millburn G.H."/>
            <person name="Prochnik S.E."/>
            <person name="Smith C.D."/>
            <person name="Tupy J.L."/>
            <person name="Whitfield E.J."/>
            <person name="Bayraktaroglu L."/>
            <person name="Berman B.P."/>
            <person name="Bettencourt B.R."/>
            <person name="Celniker S.E."/>
            <person name="de Grey A.D.N.J."/>
            <person name="Drysdale R.A."/>
            <person name="Harris N.L."/>
            <person name="Richter J."/>
            <person name="Russo S."/>
            <person name="Schroeder A.J."/>
            <person name="Shu S.Q."/>
            <person name="Stapleton M."/>
            <person name="Yamada C."/>
            <person name="Ashburner M."/>
            <person name="Gelbart W.M."/>
            <person name="Rubin G.M."/>
            <person name="Lewis S.E."/>
        </authorList>
    </citation>
    <scope>GENOME REANNOTATION</scope>
    <source>
        <strain>Berkeley</strain>
    </source>
</reference>
<reference evidence="6" key="3">
    <citation type="journal article" date="2000" name="Science">
        <title>Candidate taste receptors in Drosophila.</title>
        <authorList>
            <person name="Clyne P.J."/>
            <person name="Warr C.G."/>
            <person name="Carlson J.R."/>
        </authorList>
    </citation>
    <scope>IDENTIFICATION</scope>
</reference>
<reference evidence="6" key="4">
    <citation type="journal article" date="2001" name="Curr. Biol.">
        <title>Spatially restricted expression of candidate taste receptors in the Drosophila gustatory system.</title>
        <authorList>
            <person name="Dunipace L."/>
            <person name="Meister S."/>
            <person name="McNealy C."/>
            <person name="Amrein H."/>
        </authorList>
    </citation>
    <scope>IDENTIFICATION</scope>
</reference>
<reference key="5">
    <citation type="journal article" date="2009" name="Proc. Natl. Acad. Sci. U.S.A.">
        <title>Multiple gustatory receptors required for the caffeine response in Drosophila.</title>
        <authorList>
            <person name="Lee Y."/>
            <person name="Moon S.J."/>
            <person name="Montell C."/>
        </authorList>
    </citation>
    <scope>FUNCTION</scope>
    <scope>DISRUPTION PHENOTYPE</scope>
</reference>
<reference key="6">
    <citation type="journal article" date="2011" name="J. Neurosci.">
        <title>Molecular and cellular organization of the taste system in the Drosophila larva.</title>
        <authorList>
            <person name="Kwon J.Y."/>
            <person name="Dahanukar A."/>
            <person name="Weiss L.A."/>
            <person name="Carlson J.R."/>
        </authorList>
    </citation>
    <scope>TISSUE SPECIFICITY</scope>
</reference>
<accession>Q9VD76</accession>
<gene>
    <name type="primary">Gr93a</name>
    <name type="synonym">GR93F.1</name>
    <name type="ORF">CG13417</name>
</gene>
<evidence type="ECO:0000250" key="1"/>
<evidence type="ECO:0000255" key="2"/>
<evidence type="ECO:0000269" key="3">
    <source>
    </source>
</evidence>
<evidence type="ECO:0000269" key="4">
    <source>
    </source>
</evidence>
<evidence type="ECO:0000269" key="5">
    <source>
    </source>
</evidence>
<evidence type="ECO:0000305" key="6"/>
<evidence type="ECO:0000312" key="7">
    <source>
        <dbReference type="EMBL" id="AAF55923.2"/>
    </source>
</evidence>
<name>GR93A_DROME</name>
<organism evidence="7">
    <name type="scientific">Drosophila melanogaster</name>
    <name type="common">Fruit fly</name>
    <dbReference type="NCBI Taxonomy" id="7227"/>
    <lineage>
        <taxon>Eukaryota</taxon>
        <taxon>Metazoa</taxon>
        <taxon>Ecdysozoa</taxon>
        <taxon>Arthropoda</taxon>
        <taxon>Hexapoda</taxon>
        <taxon>Insecta</taxon>
        <taxon>Pterygota</taxon>
        <taxon>Neoptera</taxon>
        <taxon>Endopterygota</taxon>
        <taxon>Diptera</taxon>
        <taxon>Brachycera</taxon>
        <taxon>Muscomorpha</taxon>
        <taxon>Ephydroidea</taxon>
        <taxon>Drosophilidae</taxon>
        <taxon>Drosophila</taxon>
        <taxon>Sophophora</taxon>
    </lineage>
</organism>
<comment type="function">
    <text evidence="4">Gustatory receptor required for response to the bitter in taste neurons. Gr93a cells respond to bitter compounds such as caffeine. Flies avoid bitter substances, suggesting that Gr93a neuron activity is sufficient to mediate avoidance behavior.</text>
</comment>
<comment type="subcellular location">
    <subcellularLocation>
        <location evidence="1">Cell membrane</location>
        <topology evidence="1">Multi-pass membrane protein</topology>
    </subcellularLocation>
</comment>
<comment type="tissue specificity">
    <text evidence="5">In larvae, is expressed in neurons of the dorsal pharyngeal sense organs.</text>
</comment>
<comment type="disruption phenotype">
    <text evidence="4">Disrupts fly aversion to caffeine.</text>
</comment>
<comment type="similarity">
    <text evidence="6">Belongs to the insect chemoreceptor superfamily. Gustatory receptor (GR) family. Gr93a subfamily.</text>
</comment>
<dbReference type="EMBL" id="AE014297">
    <property type="protein sequence ID" value="AAF55923.2"/>
    <property type="molecule type" value="Genomic_DNA"/>
</dbReference>
<dbReference type="RefSeq" id="NP_524442.2">
    <property type="nucleotide sequence ID" value="NM_079718.3"/>
</dbReference>
<dbReference type="SMR" id="Q9VD76"/>
<dbReference type="FunCoup" id="Q9VD76">
    <property type="interactions" value="8"/>
</dbReference>
<dbReference type="STRING" id="7227.FBpp0083531"/>
<dbReference type="PaxDb" id="7227-FBpp0083531"/>
<dbReference type="EnsemblMetazoa" id="FBtr0084133">
    <property type="protein sequence ID" value="FBpp0083531"/>
    <property type="gene ID" value="FBgn0041229"/>
</dbReference>
<dbReference type="GeneID" id="42568"/>
<dbReference type="KEGG" id="dme:Dmel_CG13417"/>
<dbReference type="AGR" id="FB:FBgn0041229"/>
<dbReference type="CTD" id="42568"/>
<dbReference type="FlyBase" id="FBgn0041229">
    <property type="gene designation" value="Gr93a"/>
</dbReference>
<dbReference type="VEuPathDB" id="VectorBase:FBgn0041229"/>
<dbReference type="eggNOG" id="ENOG502T83R">
    <property type="taxonomic scope" value="Eukaryota"/>
</dbReference>
<dbReference type="HOGENOM" id="CLU_614325_0_0_1"/>
<dbReference type="InParanoid" id="Q9VD76"/>
<dbReference type="OMA" id="QRWDKSV"/>
<dbReference type="OrthoDB" id="8018192at2759"/>
<dbReference type="PhylomeDB" id="Q9VD76"/>
<dbReference type="BioGRID-ORCS" id="42568">
    <property type="hits" value="0 hits in 1 CRISPR screen"/>
</dbReference>
<dbReference type="GenomeRNAi" id="42568"/>
<dbReference type="PRO" id="PR:Q9VD76"/>
<dbReference type="Proteomes" id="UP000000803">
    <property type="component" value="Chromosome 3R"/>
</dbReference>
<dbReference type="Bgee" id="FBgn0041229">
    <property type="expression patterns" value="Expressed in adult middle midgut class I enteroendocrine cell in adult midgut (Drosophila) and 2 other cell types or tissues"/>
</dbReference>
<dbReference type="ExpressionAtlas" id="Q9VD76">
    <property type="expression patterns" value="baseline and differential"/>
</dbReference>
<dbReference type="GO" id="GO:0030424">
    <property type="term" value="C:axon"/>
    <property type="evidence" value="ECO:0000318"/>
    <property type="project" value="GO_Central"/>
</dbReference>
<dbReference type="GO" id="GO:0030425">
    <property type="term" value="C:dendrite"/>
    <property type="evidence" value="ECO:0000318"/>
    <property type="project" value="GO_Central"/>
</dbReference>
<dbReference type="GO" id="GO:0016020">
    <property type="term" value="C:membrane"/>
    <property type="evidence" value="ECO:0000303"/>
    <property type="project" value="UniProtKB"/>
</dbReference>
<dbReference type="GO" id="GO:0043025">
    <property type="term" value="C:neuronal cell body"/>
    <property type="evidence" value="ECO:0000318"/>
    <property type="project" value="GO_Central"/>
</dbReference>
<dbReference type="GO" id="GO:0005886">
    <property type="term" value="C:plasma membrane"/>
    <property type="evidence" value="ECO:0000250"/>
    <property type="project" value="FlyBase"/>
</dbReference>
<dbReference type="GO" id="GO:0015276">
    <property type="term" value="F:ligand-gated monoatomic ion channel activity"/>
    <property type="evidence" value="ECO:0000250"/>
    <property type="project" value="FlyBase"/>
</dbReference>
<dbReference type="GO" id="GO:0008527">
    <property type="term" value="F:taste receptor activity"/>
    <property type="evidence" value="ECO:0000303"/>
    <property type="project" value="UniProtKB"/>
</dbReference>
<dbReference type="GO" id="GO:0007635">
    <property type="term" value="P:chemosensory behavior"/>
    <property type="evidence" value="ECO:0000318"/>
    <property type="project" value="GO_Central"/>
</dbReference>
<dbReference type="GO" id="GO:0008049">
    <property type="term" value="P:male courtship behavior"/>
    <property type="evidence" value="ECO:0000318"/>
    <property type="project" value="GO_Central"/>
</dbReference>
<dbReference type="GO" id="GO:0034220">
    <property type="term" value="P:monoatomic ion transmembrane transport"/>
    <property type="evidence" value="ECO:0000250"/>
    <property type="project" value="FlyBase"/>
</dbReference>
<dbReference type="GO" id="GO:0031000">
    <property type="term" value="P:response to caffeine"/>
    <property type="evidence" value="ECO:0000315"/>
    <property type="project" value="FlyBase"/>
</dbReference>
<dbReference type="GO" id="GO:0050909">
    <property type="term" value="P:sensory perception of taste"/>
    <property type="evidence" value="ECO:0000303"/>
    <property type="project" value="UniProtKB"/>
</dbReference>
<dbReference type="GO" id="GO:0007165">
    <property type="term" value="P:signal transduction"/>
    <property type="evidence" value="ECO:0007669"/>
    <property type="project" value="UniProtKB-KW"/>
</dbReference>
<dbReference type="InterPro" id="IPR013604">
    <property type="entry name" value="7TM_chemorcpt"/>
</dbReference>
<dbReference type="PANTHER" id="PTHR21143:SF133">
    <property type="entry name" value="GUSTATORY AND PHEROMONE RECEPTOR 32A-RELATED"/>
    <property type="match status" value="1"/>
</dbReference>
<dbReference type="PANTHER" id="PTHR21143">
    <property type="entry name" value="INVERTEBRATE GUSTATORY RECEPTOR"/>
    <property type="match status" value="1"/>
</dbReference>
<dbReference type="Pfam" id="PF08395">
    <property type="entry name" value="7tm_7"/>
    <property type="match status" value="1"/>
</dbReference>
<sequence length="419" mass="48834">MFSSSSAMTGKRAESWSRLLLLWLYRCARGLLVLSSSLDRDKLQLKATKQGSRNRFLHILWRCIVVMIYAGLWPMLTSAVIGKRLESYADVLALAQSMSVSILAVISFVIQARGENQFREVLNRYLALYQRICLTTRLRHLFPTKFVVFFLLKLFFTLCGCFHEIIPLFENSHFDDISQMVGTGFGIYMWLGTLCVLDACFLGFLVSGILYEHMANNIIAMLKRMEPIESQDERYRMTKYRRMQLLCDFADELDECAAIYSELYHVTNSFRRILQWQILFYIYLNFINICLMLYQYILHFLNDDEVVFVSIVMAFVKLANLVLLMMCADYTVRQSEVPKKLPLDIVCSDMDERWDKSVETFLGQLQTQRLEIKVLGFFHLNNEFILLILSAIISYLFILIQFGITGGFEASEDIKNRFD</sequence>
<feature type="chain" id="PRO_0000216541" description="Gustatory receptor for bitter taste 93a">
    <location>
        <begin position="1"/>
        <end position="419"/>
    </location>
</feature>
<feature type="topological domain" description="Cytoplasmic" evidence="1">
    <location>
        <begin position="1"/>
        <end position="55"/>
    </location>
</feature>
<feature type="transmembrane region" description="Helical; Name=1" evidence="2">
    <location>
        <begin position="56"/>
        <end position="76"/>
    </location>
</feature>
<feature type="topological domain" description="Extracellular" evidence="1">
    <location>
        <begin position="77"/>
        <end position="90"/>
    </location>
</feature>
<feature type="transmembrane region" description="Helical; Name=2" evidence="2">
    <location>
        <begin position="91"/>
        <end position="111"/>
    </location>
</feature>
<feature type="topological domain" description="Cytoplasmic" evidence="1">
    <location>
        <begin position="112"/>
        <end position="145"/>
    </location>
</feature>
<feature type="transmembrane region" description="Helical; Name=3" evidence="2">
    <location>
        <begin position="146"/>
        <end position="166"/>
    </location>
</feature>
<feature type="topological domain" description="Extracellular" evidence="1">
    <location>
        <begin position="167"/>
        <end position="184"/>
    </location>
</feature>
<feature type="transmembrane region" description="Helical; Name=4" evidence="2">
    <location>
        <begin position="185"/>
        <end position="205"/>
    </location>
</feature>
<feature type="topological domain" description="Cytoplasmic" evidence="1">
    <location>
        <begin position="206"/>
        <end position="277"/>
    </location>
</feature>
<feature type="transmembrane region" description="Helical; Name=5" evidence="2">
    <location>
        <begin position="278"/>
        <end position="298"/>
    </location>
</feature>
<feature type="topological domain" description="Extracellular" evidence="1">
    <location>
        <begin position="299"/>
        <end position="305"/>
    </location>
</feature>
<feature type="transmembrane region" description="Helical; Name=6" evidence="2">
    <location>
        <begin position="306"/>
        <end position="326"/>
    </location>
</feature>
<feature type="topological domain" description="Cytoplasmic" evidence="1">
    <location>
        <begin position="327"/>
        <end position="383"/>
    </location>
</feature>
<feature type="transmembrane region" description="Helical; Name=7" evidence="2">
    <location>
        <begin position="384"/>
        <end position="404"/>
    </location>
</feature>
<feature type="topological domain" description="Extracellular" evidence="1">
    <location>
        <begin position="405"/>
        <end position="419"/>
    </location>
</feature>
<proteinExistence type="evidence at transcript level"/>
<keyword id="KW-1003">Cell membrane</keyword>
<keyword id="KW-0472">Membrane</keyword>
<keyword id="KW-0675">Receptor</keyword>
<keyword id="KW-1185">Reference proteome</keyword>
<keyword id="KW-0807">Transducer</keyword>
<keyword id="KW-0812">Transmembrane</keyword>
<keyword id="KW-1133">Transmembrane helix</keyword>
<protein>
    <recommendedName>
        <fullName>Gustatory receptor for bitter taste 93a</fullName>
    </recommendedName>
</protein>